<dbReference type="EC" id="5.6.1.7" evidence="1"/>
<dbReference type="EMBL" id="CP000672">
    <property type="protein sequence ID" value="ABR00104.1"/>
    <property type="molecule type" value="Genomic_DNA"/>
</dbReference>
<dbReference type="SMR" id="A5UH48"/>
<dbReference type="KEGG" id="hiq:CGSHiGG_05975"/>
<dbReference type="HOGENOM" id="CLU_016503_3_0_6"/>
<dbReference type="Proteomes" id="UP000001990">
    <property type="component" value="Chromosome"/>
</dbReference>
<dbReference type="GO" id="GO:0005737">
    <property type="term" value="C:cytoplasm"/>
    <property type="evidence" value="ECO:0007669"/>
    <property type="project" value="UniProtKB-SubCell"/>
</dbReference>
<dbReference type="GO" id="GO:0005524">
    <property type="term" value="F:ATP binding"/>
    <property type="evidence" value="ECO:0007669"/>
    <property type="project" value="UniProtKB-UniRule"/>
</dbReference>
<dbReference type="GO" id="GO:0140662">
    <property type="term" value="F:ATP-dependent protein folding chaperone"/>
    <property type="evidence" value="ECO:0007669"/>
    <property type="project" value="InterPro"/>
</dbReference>
<dbReference type="GO" id="GO:0016853">
    <property type="term" value="F:isomerase activity"/>
    <property type="evidence" value="ECO:0007669"/>
    <property type="project" value="UniProtKB-KW"/>
</dbReference>
<dbReference type="GO" id="GO:0051082">
    <property type="term" value="F:unfolded protein binding"/>
    <property type="evidence" value="ECO:0007669"/>
    <property type="project" value="UniProtKB-UniRule"/>
</dbReference>
<dbReference type="GO" id="GO:0042026">
    <property type="term" value="P:protein refolding"/>
    <property type="evidence" value="ECO:0007669"/>
    <property type="project" value="UniProtKB-UniRule"/>
</dbReference>
<dbReference type="CDD" id="cd03344">
    <property type="entry name" value="GroEL"/>
    <property type="match status" value="1"/>
</dbReference>
<dbReference type="FunFam" id="1.10.560.10:FF:000001">
    <property type="entry name" value="60 kDa chaperonin"/>
    <property type="match status" value="1"/>
</dbReference>
<dbReference type="FunFam" id="3.50.7.10:FF:000001">
    <property type="entry name" value="60 kDa chaperonin"/>
    <property type="match status" value="1"/>
</dbReference>
<dbReference type="Gene3D" id="3.50.7.10">
    <property type="entry name" value="GroEL"/>
    <property type="match status" value="1"/>
</dbReference>
<dbReference type="Gene3D" id="1.10.560.10">
    <property type="entry name" value="GroEL-like equatorial domain"/>
    <property type="match status" value="1"/>
</dbReference>
<dbReference type="Gene3D" id="3.30.260.10">
    <property type="entry name" value="TCP-1-like chaperonin intermediate domain"/>
    <property type="match status" value="1"/>
</dbReference>
<dbReference type="HAMAP" id="MF_00600">
    <property type="entry name" value="CH60"/>
    <property type="match status" value="1"/>
</dbReference>
<dbReference type="InterPro" id="IPR018370">
    <property type="entry name" value="Chaperonin_Cpn60_CS"/>
</dbReference>
<dbReference type="InterPro" id="IPR001844">
    <property type="entry name" value="Cpn60/GroEL"/>
</dbReference>
<dbReference type="InterPro" id="IPR002423">
    <property type="entry name" value="Cpn60/GroEL/TCP-1"/>
</dbReference>
<dbReference type="InterPro" id="IPR027409">
    <property type="entry name" value="GroEL-like_apical_dom_sf"/>
</dbReference>
<dbReference type="InterPro" id="IPR027413">
    <property type="entry name" value="GROEL-like_equatorial_sf"/>
</dbReference>
<dbReference type="InterPro" id="IPR027410">
    <property type="entry name" value="TCP-1-like_intermed_sf"/>
</dbReference>
<dbReference type="NCBIfam" id="TIGR02348">
    <property type="entry name" value="GroEL"/>
    <property type="match status" value="1"/>
</dbReference>
<dbReference type="NCBIfam" id="NF000592">
    <property type="entry name" value="PRK00013.1"/>
    <property type="match status" value="1"/>
</dbReference>
<dbReference type="NCBIfam" id="NF009487">
    <property type="entry name" value="PRK12849.1"/>
    <property type="match status" value="1"/>
</dbReference>
<dbReference type="NCBIfam" id="NF009488">
    <property type="entry name" value="PRK12850.1"/>
    <property type="match status" value="1"/>
</dbReference>
<dbReference type="NCBIfam" id="NF009489">
    <property type="entry name" value="PRK12851.1"/>
    <property type="match status" value="1"/>
</dbReference>
<dbReference type="PANTHER" id="PTHR45633">
    <property type="entry name" value="60 KDA HEAT SHOCK PROTEIN, MITOCHONDRIAL"/>
    <property type="match status" value="1"/>
</dbReference>
<dbReference type="Pfam" id="PF00118">
    <property type="entry name" value="Cpn60_TCP1"/>
    <property type="match status" value="1"/>
</dbReference>
<dbReference type="PRINTS" id="PR00298">
    <property type="entry name" value="CHAPERONIN60"/>
</dbReference>
<dbReference type="SUPFAM" id="SSF52029">
    <property type="entry name" value="GroEL apical domain-like"/>
    <property type="match status" value="1"/>
</dbReference>
<dbReference type="SUPFAM" id="SSF48592">
    <property type="entry name" value="GroEL equatorial domain-like"/>
    <property type="match status" value="1"/>
</dbReference>
<dbReference type="SUPFAM" id="SSF54849">
    <property type="entry name" value="GroEL-intermediate domain like"/>
    <property type="match status" value="1"/>
</dbReference>
<dbReference type="PROSITE" id="PS00296">
    <property type="entry name" value="CHAPERONINS_CPN60"/>
    <property type="match status" value="1"/>
</dbReference>
<reference key="1">
    <citation type="journal article" date="2007" name="Genome Biol.">
        <title>Characterization and modeling of the Haemophilus influenzae core and supragenomes based on the complete genomic sequences of Rd and 12 clinical nontypeable strains.</title>
        <authorList>
            <person name="Hogg J.S."/>
            <person name="Hu F.Z."/>
            <person name="Janto B."/>
            <person name="Boissy R."/>
            <person name="Hayes J."/>
            <person name="Keefe R."/>
            <person name="Post J.C."/>
            <person name="Ehrlich G.D."/>
        </authorList>
    </citation>
    <scope>NUCLEOTIDE SEQUENCE [LARGE SCALE GENOMIC DNA]</scope>
    <source>
        <strain>PittGG</strain>
    </source>
</reference>
<sequence length="548" mass="57570">MAAKDVKFGNDARVKMLKGVNVLADAVKVTLGPKGRNVILDKSFGAPTITKDGVSVAREIELEDKFENMGAQMVKEVASKANDAAGDGTTTATVLAQAIVNEGLKAVAAGMNPMDLKRGIDKAVSAVVSELKNLSKPCETSKEIEQVGTISANSDSIVGQLISQAMEKVGKEGVITVEDGTGLEDELDVVEGMQFDRGYLSPYFINKPETATVELDNPYLLLVDKKISNIRELLPVLEGVAKAGKPLLIIAEDVEGEALATLVVNTMRGIVKVAAVKAPGFGDRRKAMLQDIAILTAGTVISEEIGMELEKATLEDLGQAKRVVINKDNTTIIDGIGDEAQIKGRVAQIRQQIEESTSDYDKEKLQERVAKLAGGVAVIKVGAATEVEMKEKKDRVDDALHATRAAVEEGIVAGGGVALVRAAAKVAASLKGDNEEQNVGIKLALRAMEAPLRQIVTNAGEEASVVASAVKNGEGNFGYNAGTEQYGDMIEMGILDPTKVTRSALQFAASVAGLMITTECMVTDLPKDDKADLGAAGMGGMGGMGGMM</sequence>
<organism>
    <name type="scientific">Haemophilus influenzae (strain PittGG)</name>
    <dbReference type="NCBI Taxonomy" id="374931"/>
    <lineage>
        <taxon>Bacteria</taxon>
        <taxon>Pseudomonadati</taxon>
        <taxon>Pseudomonadota</taxon>
        <taxon>Gammaproteobacteria</taxon>
        <taxon>Pasteurellales</taxon>
        <taxon>Pasteurellaceae</taxon>
        <taxon>Haemophilus</taxon>
    </lineage>
</organism>
<accession>A5UH48</accession>
<keyword id="KW-0067">ATP-binding</keyword>
<keyword id="KW-0143">Chaperone</keyword>
<keyword id="KW-0963">Cytoplasm</keyword>
<keyword id="KW-0413">Isomerase</keyword>
<keyword id="KW-0547">Nucleotide-binding</keyword>
<evidence type="ECO:0000255" key="1">
    <source>
        <dbReference type="HAMAP-Rule" id="MF_00600"/>
    </source>
</evidence>
<comment type="function">
    <text evidence="1">Together with its co-chaperonin GroES, plays an essential role in assisting protein folding. The GroEL-GroES system forms a nano-cage that allows encapsulation of the non-native substrate proteins and provides a physical environment optimized to promote and accelerate protein folding.</text>
</comment>
<comment type="catalytic activity">
    <reaction evidence="1">
        <text>ATP + H2O + a folded polypeptide = ADP + phosphate + an unfolded polypeptide.</text>
        <dbReference type="EC" id="5.6.1.7"/>
    </reaction>
</comment>
<comment type="subunit">
    <text evidence="1">Forms a cylinder of 14 subunits composed of two heptameric rings stacked back-to-back. Interacts with the co-chaperonin GroES.</text>
</comment>
<comment type="subcellular location">
    <subcellularLocation>
        <location evidence="1">Cytoplasm</location>
    </subcellularLocation>
</comment>
<comment type="similarity">
    <text evidence="1">Belongs to the chaperonin (HSP60) family.</text>
</comment>
<protein>
    <recommendedName>
        <fullName evidence="1">Chaperonin GroEL</fullName>
        <ecNumber evidence="1">5.6.1.7</ecNumber>
    </recommendedName>
    <alternativeName>
        <fullName evidence="1">60 kDa chaperonin</fullName>
    </alternativeName>
    <alternativeName>
        <fullName evidence="1">Chaperonin-60</fullName>
        <shortName evidence="1">Cpn60</shortName>
    </alternativeName>
</protein>
<gene>
    <name evidence="1" type="primary">groEL</name>
    <name evidence="1" type="synonym">groL</name>
    <name type="ordered locus">CGSHiGG_05975</name>
</gene>
<proteinExistence type="inferred from homology"/>
<name>CH60_HAEIG</name>
<feature type="chain" id="PRO_1000025789" description="Chaperonin GroEL">
    <location>
        <begin position="1"/>
        <end position="548"/>
    </location>
</feature>
<feature type="binding site" evidence="1">
    <location>
        <begin position="30"/>
        <end position="33"/>
    </location>
    <ligand>
        <name>ATP</name>
        <dbReference type="ChEBI" id="CHEBI:30616"/>
    </ligand>
</feature>
<feature type="binding site" evidence="1">
    <location>
        <position position="51"/>
    </location>
    <ligand>
        <name>ATP</name>
        <dbReference type="ChEBI" id="CHEBI:30616"/>
    </ligand>
</feature>
<feature type="binding site" evidence="1">
    <location>
        <begin position="87"/>
        <end position="91"/>
    </location>
    <ligand>
        <name>ATP</name>
        <dbReference type="ChEBI" id="CHEBI:30616"/>
    </ligand>
</feature>
<feature type="binding site" evidence="1">
    <location>
        <position position="415"/>
    </location>
    <ligand>
        <name>ATP</name>
        <dbReference type="ChEBI" id="CHEBI:30616"/>
    </ligand>
</feature>
<feature type="binding site" evidence="1">
    <location>
        <position position="496"/>
    </location>
    <ligand>
        <name>ATP</name>
        <dbReference type="ChEBI" id="CHEBI:30616"/>
    </ligand>
</feature>